<keyword id="KW-0143">Chaperone</keyword>
<keyword id="KW-0963">Cytoplasm</keyword>
<keyword id="KW-0238">DNA-binding</keyword>
<keyword id="KW-1185">Reference proteome</keyword>
<gene>
    <name evidence="1" type="primary">cbpA</name>
    <name type="ordered locus">SbBS512_E2314</name>
</gene>
<evidence type="ECO:0000255" key="1">
    <source>
        <dbReference type="HAMAP-Rule" id="MF_01154"/>
    </source>
</evidence>
<accession>B2TTP8</accession>
<dbReference type="EMBL" id="CP001063">
    <property type="protein sequence ID" value="ACD09781.1"/>
    <property type="molecule type" value="Genomic_DNA"/>
</dbReference>
<dbReference type="RefSeq" id="WP_000420614.1">
    <property type="nucleotide sequence ID" value="NC_010658.1"/>
</dbReference>
<dbReference type="SMR" id="B2TTP8"/>
<dbReference type="STRING" id="344609.SbBS512_E2314"/>
<dbReference type="KEGG" id="sbc:SbBS512_E2314"/>
<dbReference type="HOGENOM" id="CLU_017633_0_0_6"/>
<dbReference type="Proteomes" id="UP000001030">
    <property type="component" value="Chromosome"/>
</dbReference>
<dbReference type="GO" id="GO:0005737">
    <property type="term" value="C:cytoplasm"/>
    <property type="evidence" value="ECO:0007669"/>
    <property type="project" value="UniProtKB-UniRule"/>
</dbReference>
<dbReference type="GO" id="GO:0009295">
    <property type="term" value="C:nucleoid"/>
    <property type="evidence" value="ECO:0007669"/>
    <property type="project" value="UniProtKB-SubCell"/>
</dbReference>
<dbReference type="GO" id="GO:0003681">
    <property type="term" value="F:bent DNA binding"/>
    <property type="evidence" value="ECO:0007669"/>
    <property type="project" value="UniProtKB-UniRule"/>
</dbReference>
<dbReference type="GO" id="GO:0051082">
    <property type="term" value="F:unfolded protein binding"/>
    <property type="evidence" value="ECO:0007669"/>
    <property type="project" value="InterPro"/>
</dbReference>
<dbReference type="GO" id="GO:0051085">
    <property type="term" value="P:chaperone cofactor-dependent protein refolding"/>
    <property type="evidence" value="ECO:0007669"/>
    <property type="project" value="TreeGrafter"/>
</dbReference>
<dbReference type="GO" id="GO:0042026">
    <property type="term" value="P:protein refolding"/>
    <property type="evidence" value="ECO:0007669"/>
    <property type="project" value="TreeGrafter"/>
</dbReference>
<dbReference type="CDD" id="cd06257">
    <property type="entry name" value="DnaJ"/>
    <property type="match status" value="1"/>
</dbReference>
<dbReference type="CDD" id="cd10747">
    <property type="entry name" value="DnaJ_C"/>
    <property type="match status" value="1"/>
</dbReference>
<dbReference type="FunFam" id="1.10.287.110:FF:000013">
    <property type="entry name" value="Curved DNA-binding protein"/>
    <property type="match status" value="1"/>
</dbReference>
<dbReference type="FunFam" id="2.60.260.20:FF:000008">
    <property type="entry name" value="Curved DNA-binding protein"/>
    <property type="match status" value="1"/>
</dbReference>
<dbReference type="FunFam" id="2.60.260.20:FF:000010">
    <property type="entry name" value="Curved DNA-binding protein"/>
    <property type="match status" value="1"/>
</dbReference>
<dbReference type="Gene3D" id="1.10.287.110">
    <property type="entry name" value="DnaJ domain"/>
    <property type="match status" value="1"/>
</dbReference>
<dbReference type="Gene3D" id="1.20.5.460">
    <property type="entry name" value="Single helix bin"/>
    <property type="match status" value="1"/>
</dbReference>
<dbReference type="Gene3D" id="2.60.260.20">
    <property type="entry name" value="Urease metallochaperone UreE, N-terminal domain"/>
    <property type="match status" value="2"/>
</dbReference>
<dbReference type="HAMAP" id="MF_01154">
    <property type="entry name" value="CbpA"/>
    <property type="match status" value="1"/>
</dbReference>
<dbReference type="InterPro" id="IPR023859">
    <property type="entry name" value="DNA-bd_curved-DNA"/>
</dbReference>
<dbReference type="InterPro" id="IPR002939">
    <property type="entry name" value="DnaJ_C"/>
</dbReference>
<dbReference type="InterPro" id="IPR001623">
    <property type="entry name" value="DnaJ_domain"/>
</dbReference>
<dbReference type="InterPro" id="IPR018253">
    <property type="entry name" value="DnaJ_domain_CS"/>
</dbReference>
<dbReference type="InterPro" id="IPR008971">
    <property type="entry name" value="HSP40/DnaJ_pept-bd"/>
</dbReference>
<dbReference type="InterPro" id="IPR036869">
    <property type="entry name" value="J_dom_sf"/>
</dbReference>
<dbReference type="NCBIfam" id="NF007618">
    <property type="entry name" value="PRK10266.1"/>
    <property type="match status" value="1"/>
</dbReference>
<dbReference type="PANTHER" id="PTHR43096">
    <property type="entry name" value="DNAJ HOMOLOG 1, MITOCHONDRIAL-RELATED"/>
    <property type="match status" value="1"/>
</dbReference>
<dbReference type="PANTHER" id="PTHR43096:SF52">
    <property type="entry name" value="DNAJ HOMOLOG 1, MITOCHONDRIAL-RELATED"/>
    <property type="match status" value="1"/>
</dbReference>
<dbReference type="Pfam" id="PF00226">
    <property type="entry name" value="DnaJ"/>
    <property type="match status" value="1"/>
</dbReference>
<dbReference type="Pfam" id="PF01556">
    <property type="entry name" value="DnaJ_C"/>
    <property type="match status" value="1"/>
</dbReference>
<dbReference type="PRINTS" id="PR00625">
    <property type="entry name" value="JDOMAIN"/>
</dbReference>
<dbReference type="SMART" id="SM00271">
    <property type="entry name" value="DnaJ"/>
    <property type="match status" value="1"/>
</dbReference>
<dbReference type="SUPFAM" id="SSF46565">
    <property type="entry name" value="Chaperone J-domain"/>
    <property type="match status" value="1"/>
</dbReference>
<dbReference type="SUPFAM" id="SSF49493">
    <property type="entry name" value="HSP40/DnaJ peptide-binding domain"/>
    <property type="match status" value="2"/>
</dbReference>
<dbReference type="PROSITE" id="PS00636">
    <property type="entry name" value="DNAJ_1"/>
    <property type="match status" value="1"/>
</dbReference>
<dbReference type="PROSITE" id="PS50076">
    <property type="entry name" value="DNAJ_2"/>
    <property type="match status" value="1"/>
</dbReference>
<feature type="chain" id="PRO_1000137763" description="Curved DNA-binding protein">
    <location>
        <begin position="1"/>
        <end position="306"/>
    </location>
</feature>
<feature type="domain" description="J" evidence="1">
    <location>
        <begin position="5"/>
        <end position="69"/>
    </location>
</feature>
<protein>
    <recommendedName>
        <fullName evidence="1">Curved DNA-binding protein</fullName>
    </recommendedName>
</protein>
<proteinExistence type="inferred from homology"/>
<reference key="1">
    <citation type="submission" date="2008-05" db="EMBL/GenBank/DDBJ databases">
        <title>Complete sequence of Shigella boydii serotype 18 strain BS512.</title>
        <authorList>
            <person name="Rasko D.A."/>
            <person name="Rosovitz M."/>
            <person name="Maurelli A.T."/>
            <person name="Myers G."/>
            <person name="Seshadri R."/>
            <person name="Cer R."/>
            <person name="Jiang L."/>
            <person name="Ravel J."/>
            <person name="Sebastian Y."/>
        </authorList>
    </citation>
    <scope>NUCLEOTIDE SEQUENCE [LARGE SCALE GENOMIC DNA]</scope>
    <source>
        <strain>CDC 3083-94 / BS512</strain>
    </source>
</reference>
<name>CBPA_SHIB3</name>
<sequence>MELKDYYAIMGVKPTDDLKTIKTAYRRLARKYHPDVSKEPDAEARFKEVAEAWEVLSDEQRRAEYDQMWQHRNDPQFNRQFHHGDGQSFNAEDFDDIFSSIFGQHARQSRQRPAARGHDIEIEVAVFLEETLTEHKRTISYNLPVYNAFGMIEQEIPKTLNVKIPAGVGNGQRIRLKGQGTPDENGGPNGDLWLVIHIAPHPLFDIVGQDLEIVVPVSPWEAALGAKVTVPTLKESILLTIPPGSQAGQRLRVKGKGLVSKKQTGDLYAVLKIVMPPKPDENTAALWQQLADAQSSFDPRKDWGKA</sequence>
<organism>
    <name type="scientific">Shigella boydii serotype 18 (strain CDC 3083-94 / BS512)</name>
    <dbReference type="NCBI Taxonomy" id="344609"/>
    <lineage>
        <taxon>Bacteria</taxon>
        <taxon>Pseudomonadati</taxon>
        <taxon>Pseudomonadota</taxon>
        <taxon>Gammaproteobacteria</taxon>
        <taxon>Enterobacterales</taxon>
        <taxon>Enterobacteriaceae</taxon>
        <taxon>Shigella</taxon>
    </lineage>
</organism>
<comment type="function">
    <text evidence="1">DNA-binding protein that preferentially recognizes a curved DNA sequence. It is probably a functional analog of DnaJ; displays overlapping activities with DnaJ, but functions under different conditions, probably acting as a molecular chaperone in an adaptive response to environmental stresses other than heat shock. Lacks autonomous chaperone activity; binds native substrates and targets them for recognition by DnaK. Its activity is inhibited by the binding of CbpM.</text>
</comment>
<comment type="subcellular location">
    <subcellularLocation>
        <location evidence="1">Cytoplasm</location>
        <location evidence="1">Nucleoid</location>
    </subcellularLocation>
</comment>